<feature type="chain" id="PRO_1000142224" description="Large ribosomal subunit protein uL22">
    <location>
        <begin position="1"/>
        <end position="146"/>
    </location>
</feature>
<feature type="region of interest" description="Disordered" evidence="2">
    <location>
        <begin position="1"/>
        <end position="39"/>
    </location>
</feature>
<comment type="function">
    <text evidence="1">This protein binds specifically to 23S rRNA; its binding is stimulated by other ribosomal proteins, e.g. L4, L17, and L20. It is important during the early stages of 50S assembly. It makes multiple contacts with different domains of the 23S rRNA in the assembled 50S subunit and ribosome (By similarity).</text>
</comment>
<comment type="function">
    <text evidence="1">The globular domain of the protein is located near the polypeptide exit tunnel on the outside of the subunit, while an extended beta-hairpin is found that lines the wall of the exit tunnel in the center of the 70S ribosome.</text>
</comment>
<comment type="subunit">
    <text evidence="1">Part of the 50S ribosomal subunit.</text>
</comment>
<comment type="similarity">
    <text evidence="1">Belongs to the universal ribosomal protein uL22 family.</text>
</comment>
<accession>B4UBA4</accession>
<protein>
    <recommendedName>
        <fullName evidence="1">Large ribosomal subunit protein uL22</fullName>
    </recommendedName>
    <alternativeName>
        <fullName evidence="3">50S ribosomal protein L22</fullName>
    </alternativeName>
</protein>
<gene>
    <name evidence="1" type="primary">rplV</name>
    <name type="ordered locus">AnaeK_1938</name>
</gene>
<sequence length="146" mass="15815">MAETQTTTPKKKAERRAPPPARARKNRPAAPAPGPHASLSYLRVAPRKVRIVADEVRGMKVGDALAMLKYTPQSAAKPLAKLLRSAVANAEQGGGRVDVDALFVKTLTVDQGPKMRRFMARAMGRAFRVEKKTSHVYVELGTAARG</sequence>
<proteinExistence type="inferred from homology"/>
<organism>
    <name type="scientific">Anaeromyxobacter sp. (strain K)</name>
    <dbReference type="NCBI Taxonomy" id="447217"/>
    <lineage>
        <taxon>Bacteria</taxon>
        <taxon>Pseudomonadati</taxon>
        <taxon>Myxococcota</taxon>
        <taxon>Myxococcia</taxon>
        <taxon>Myxococcales</taxon>
        <taxon>Cystobacterineae</taxon>
        <taxon>Anaeromyxobacteraceae</taxon>
        <taxon>Anaeromyxobacter</taxon>
    </lineage>
</organism>
<evidence type="ECO:0000255" key="1">
    <source>
        <dbReference type="HAMAP-Rule" id="MF_01331"/>
    </source>
</evidence>
<evidence type="ECO:0000256" key="2">
    <source>
        <dbReference type="SAM" id="MobiDB-lite"/>
    </source>
</evidence>
<evidence type="ECO:0000305" key="3"/>
<dbReference type="EMBL" id="CP001131">
    <property type="protein sequence ID" value="ACG73166.1"/>
    <property type="molecule type" value="Genomic_DNA"/>
</dbReference>
<dbReference type="RefSeq" id="WP_011420995.1">
    <property type="nucleotide sequence ID" value="NC_011145.1"/>
</dbReference>
<dbReference type="SMR" id="B4UBA4"/>
<dbReference type="KEGG" id="ank:AnaeK_1938"/>
<dbReference type="HOGENOM" id="CLU_083987_3_1_7"/>
<dbReference type="OrthoDB" id="9805969at2"/>
<dbReference type="Proteomes" id="UP000001871">
    <property type="component" value="Chromosome"/>
</dbReference>
<dbReference type="GO" id="GO:0022625">
    <property type="term" value="C:cytosolic large ribosomal subunit"/>
    <property type="evidence" value="ECO:0007669"/>
    <property type="project" value="TreeGrafter"/>
</dbReference>
<dbReference type="GO" id="GO:0019843">
    <property type="term" value="F:rRNA binding"/>
    <property type="evidence" value="ECO:0007669"/>
    <property type="project" value="UniProtKB-UniRule"/>
</dbReference>
<dbReference type="GO" id="GO:0003735">
    <property type="term" value="F:structural constituent of ribosome"/>
    <property type="evidence" value="ECO:0007669"/>
    <property type="project" value="InterPro"/>
</dbReference>
<dbReference type="GO" id="GO:0006412">
    <property type="term" value="P:translation"/>
    <property type="evidence" value="ECO:0007669"/>
    <property type="project" value="UniProtKB-UniRule"/>
</dbReference>
<dbReference type="CDD" id="cd00336">
    <property type="entry name" value="Ribosomal_L22"/>
    <property type="match status" value="1"/>
</dbReference>
<dbReference type="Gene3D" id="3.90.470.10">
    <property type="entry name" value="Ribosomal protein L22/L17"/>
    <property type="match status" value="1"/>
</dbReference>
<dbReference type="HAMAP" id="MF_01331_B">
    <property type="entry name" value="Ribosomal_uL22_B"/>
    <property type="match status" value="1"/>
</dbReference>
<dbReference type="InterPro" id="IPR001063">
    <property type="entry name" value="Ribosomal_uL22"/>
</dbReference>
<dbReference type="InterPro" id="IPR005727">
    <property type="entry name" value="Ribosomal_uL22_bac/chlpt-type"/>
</dbReference>
<dbReference type="InterPro" id="IPR047867">
    <property type="entry name" value="Ribosomal_uL22_bac/org-type"/>
</dbReference>
<dbReference type="InterPro" id="IPR018260">
    <property type="entry name" value="Ribosomal_uL22_CS"/>
</dbReference>
<dbReference type="InterPro" id="IPR036394">
    <property type="entry name" value="Ribosomal_uL22_sf"/>
</dbReference>
<dbReference type="NCBIfam" id="TIGR01044">
    <property type="entry name" value="rplV_bact"/>
    <property type="match status" value="1"/>
</dbReference>
<dbReference type="PANTHER" id="PTHR13501">
    <property type="entry name" value="CHLOROPLAST 50S RIBOSOMAL PROTEIN L22-RELATED"/>
    <property type="match status" value="1"/>
</dbReference>
<dbReference type="PANTHER" id="PTHR13501:SF8">
    <property type="entry name" value="LARGE RIBOSOMAL SUBUNIT PROTEIN UL22M"/>
    <property type="match status" value="1"/>
</dbReference>
<dbReference type="Pfam" id="PF00237">
    <property type="entry name" value="Ribosomal_L22"/>
    <property type="match status" value="1"/>
</dbReference>
<dbReference type="SUPFAM" id="SSF54843">
    <property type="entry name" value="Ribosomal protein L22"/>
    <property type="match status" value="1"/>
</dbReference>
<dbReference type="PROSITE" id="PS00464">
    <property type="entry name" value="RIBOSOMAL_L22"/>
    <property type="match status" value="1"/>
</dbReference>
<reference key="1">
    <citation type="submission" date="2008-08" db="EMBL/GenBank/DDBJ databases">
        <title>Complete sequence of Anaeromyxobacter sp. K.</title>
        <authorList>
            <consortium name="US DOE Joint Genome Institute"/>
            <person name="Lucas S."/>
            <person name="Copeland A."/>
            <person name="Lapidus A."/>
            <person name="Glavina del Rio T."/>
            <person name="Dalin E."/>
            <person name="Tice H."/>
            <person name="Bruce D."/>
            <person name="Goodwin L."/>
            <person name="Pitluck S."/>
            <person name="Saunders E."/>
            <person name="Brettin T."/>
            <person name="Detter J.C."/>
            <person name="Han C."/>
            <person name="Larimer F."/>
            <person name="Land M."/>
            <person name="Hauser L."/>
            <person name="Kyrpides N."/>
            <person name="Ovchinnikiva G."/>
            <person name="Beliaev A."/>
        </authorList>
    </citation>
    <scope>NUCLEOTIDE SEQUENCE [LARGE SCALE GENOMIC DNA]</scope>
    <source>
        <strain>K</strain>
    </source>
</reference>
<keyword id="KW-0687">Ribonucleoprotein</keyword>
<keyword id="KW-0689">Ribosomal protein</keyword>
<keyword id="KW-0694">RNA-binding</keyword>
<keyword id="KW-0699">rRNA-binding</keyword>
<name>RL22_ANASK</name>